<feature type="chain" id="PRO_0000117013" description="Adenosylhomocysteinase">
    <location>
        <begin position="1"/>
        <end position="421"/>
    </location>
</feature>
<feature type="binding site" evidence="1">
    <location>
        <position position="128"/>
    </location>
    <ligand>
        <name>substrate</name>
    </ligand>
</feature>
<feature type="binding site" evidence="1">
    <location>
        <position position="153"/>
    </location>
    <ligand>
        <name>substrate</name>
    </ligand>
</feature>
<feature type="binding site" evidence="1">
    <location>
        <begin position="154"/>
        <end position="156"/>
    </location>
    <ligand>
        <name>NAD(+)</name>
        <dbReference type="ChEBI" id="CHEBI:57540"/>
    </ligand>
</feature>
<feature type="binding site" evidence="1">
    <location>
        <position position="183"/>
    </location>
    <ligand>
        <name>substrate</name>
    </ligand>
</feature>
<feature type="binding site" evidence="1">
    <location>
        <position position="187"/>
    </location>
    <ligand>
        <name>substrate</name>
    </ligand>
</feature>
<feature type="binding site" evidence="1">
    <location>
        <position position="188"/>
    </location>
    <ligand>
        <name>NAD(+)</name>
        <dbReference type="ChEBI" id="CHEBI:57540"/>
    </ligand>
</feature>
<feature type="binding site" evidence="1">
    <location>
        <begin position="217"/>
        <end position="222"/>
    </location>
    <ligand>
        <name>NAD(+)</name>
        <dbReference type="ChEBI" id="CHEBI:57540"/>
    </ligand>
</feature>
<feature type="binding site" evidence="1">
    <location>
        <position position="240"/>
    </location>
    <ligand>
        <name>NAD(+)</name>
        <dbReference type="ChEBI" id="CHEBI:57540"/>
    </ligand>
</feature>
<feature type="binding site" evidence="1">
    <location>
        <begin position="296"/>
        <end position="298"/>
    </location>
    <ligand>
        <name>NAD(+)</name>
        <dbReference type="ChEBI" id="CHEBI:57540"/>
    </ligand>
</feature>
<feature type="binding site" evidence="1">
    <location>
        <position position="343"/>
    </location>
    <ligand>
        <name>NAD(+)</name>
        <dbReference type="ChEBI" id="CHEBI:57540"/>
    </ligand>
</feature>
<dbReference type="EC" id="3.13.2.1" evidence="1"/>
<dbReference type="EMBL" id="AP006878">
    <property type="protein sequence ID" value="BAD84217.1"/>
    <property type="molecule type" value="Genomic_DNA"/>
</dbReference>
<dbReference type="RefSeq" id="WP_011248983.1">
    <property type="nucleotide sequence ID" value="NC_006624.1"/>
</dbReference>
<dbReference type="SMR" id="Q5JED2"/>
<dbReference type="FunCoup" id="Q5JED2">
    <property type="interactions" value="116"/>
</dbReference>
<dbReference type="STRING" id="69014.TK0028"/>
<dbReference type="EnsemblBacteria" id="BAD84217">
    <property type="protein sequence ID" value="BAD84217"/>
    <property type="gene ID" value="TK0028"/>
</dbReference>
<dbReference type="GeneID" id="78446528"/>
<dbReference type="KEGG" id="tko:TK0028"/>
<dbReference type="PATRIC" id="fig|69014.16.peg.28"/>
<dbReference type="eggNOG" id="arCOG04137">
    <property type="taxonomic scope" value="Archaea"/>
</dbReference>
<dbReference type="HOGENOM" id="CLU_025194_0_2_2"/>
<dbReference type="InParanoid" id="Q5JED2"/>
<dbReference type="OrthoDB" id="8479at2157"/>
<dbReference type="PhylomeDB" id="Q5JED2"/>
<dbReference type="UniPathway" id="UPA00314">
    <property type="reaction ID" value="UER00076"/>
</dbReference>
<dbReference type="Proteomes" id="UP000000536">
    <property type="component" value="Chromosome"/>
</dbReference>
<dbReference type="GO" id="GO:0005829">
    <property type="term" value="C:cytosol"/>
    <property type="evidence" value="ECO:0000318"/>
    <property type="project" value="GO_Central"/>
</dbReference>
<dbReference type="GO" id="GO:0004013">
    <property type="term" value="F:adenosylhomocysteinase activity"/>
    <property type="evidence" value="ECO:0000318"/>
    <property type="project" value="GO_Central"/>
</dbReference>
<dbReference type="GO" id="GO:0071269">
    <property type="term" value="P:L-homocysteine biosynthetic process"/>
    <property type="evidence" value="ECO:0007669"/>
    <property type="project" value="UniProtKB-UniRule"/>
</dbReference>
<dbReference type="GO" id="GO:0006730">
    <property type="term" value="P:one-carbon metabolic process"/>
    <property type="evidence" value="ECO:0007669"/>
    <property type="project" value="UniProtKB-KW"/>
</dbReference>
<dbReference type="GO" id="GO:0033353">
    <property type="term" value="P:S-adenosylmethionine cycle"/>
    <property type="evidence" value="ECO:0000318"/>
    <property type="project" value="GO_Central"/>
</dbReference>
<dbReference type="CDD" id="cd00401">
    <property type="entry name" value="SAHH"/>
    <property type="match status" value="1"/>
</dbReference>
<dbReference type="FunFam" id="3.40.50.720:FF:000004">
    <property type="entry name" value="Adenosylhomocysteinase"/>
    <property type="match status" value="1"/>
</dbReference>
<dbReference type="Gene3D" id="3.40.50.1480">
    <property type="entry name" value="Adenosylhomocysteinase-like"/>
    <property type="match status" value="1"/>
</dbReference>
<dbReference type="Gene3D" id="3.40.50.720">
    <property type="entry name" value="NAD(P)-binding Rossmann-like Domain"/>
    <property type="match status" value="1"/>
</dbReference>
<dbReference type="HAMAP" id="MF_00563">
    <property type="entry name" value="AdoHcyase"/>
    <property type="match status" value="1"/>
</dbReference>
<dbReference type="InterPro" id="IPR042172">
    <property type="entry name" value="Adenosylhomocyst_ase-like_sf"/>
</dbReference>
<dbReference type="InterPro" id="IPR000043">
    <property type="entry name" value="Adenosylhomocysteinase-like"/>
</dbReference>
<dbReference type="InterPro" id="IPR015878">
    <property type="entry name" value="Ado_hCys_hydrolase_NAD-bd"/>
</dbReference>
<dbReference type="InterPro" id="IPR036291">
    <property type="entry name" value="NAD(P)-bd_dom_sf"/>
</dbReference>
<dbReference type="InterPro" id="IPR020082">
    <property type="entry name" value="S-Ado-L-homoCys_hydrolase_CS"/>
</dbReference>
<dbReference type="NCBIfam" id="TIGR00936">
    <property type="entry name" value="ahcY"/>
    <property type="match status" value="1"/>
</dbReference>
<dbReference type="NCBIfam" id="NF004005">
    <property type="entry name" value="PRK05476.2-3"/>
    <property type="match status" value="1"/>
</dbReference>
<dbReference type="PANTHER" id="PTHR23420">
    <property type="entry name" value="ADENOSYLHOMOCYSTEINASE"/>
    <property type="match status" value="1"/>
</dbReference>
<dbReference type="PANTHER" id="PTHR23420:SF0">
    <property type="entry name" value="ADENOSYLHOMOCYSTEINASE"/>
    <property type="match status" value="1"/>
</dbReference>
<dbReference type="Pfam" id="PF05221">
    <property type="entry name" value="AdoHcyase"/>
    <property type="match status" value="2"/>
</dbReference>
<dbReference type="Pfam" id="PF00670">
    <property type="entry name" value="AdoHcyase_NAD"/>
    <property type="match status" value="1"/>
</dbReference>
<dbReference type="PIRSF" id="PIRSF001109">
    <property type="entry name" value="Ad_hcy_hydrolase"/>
    <property type="match status" value="1"/>
</dbReference>
<dbReference type="SMART" id="SM00996">
    <property type="entry name" value="AdoHcyase"/>
    <property type="match status" value="1"/>
</dbReference>
<dbReference type="SMART" id="SM00997">
    <property type="entry name" value="AdoHcyase_NAD"/>
    <property type="match status" value="1"/>
</dbReference>
<dbReference type="SUPFAM" id="SSF52283">
    <property type="entry name" value="Formate/glycerate dehydrogenase catalytic domain-like"/>
    <property type="match status" value="1"/>
</dbReference>
<dbReference type="SUPFAM" id="SSF51735">
    <property type="entry name" value="NAD(P)-binding Rossmann-fold domains"/>
    <property type="match status" value="1"/>
</dbReference>
<dbReference type="PROSITE" id="PS00738">
    <property type="entry name" value="ADOHCYASE_1"/>
    <property type="match status" value="1"/>
</dbReference>
<dbReference type="PROSITE" id="PS00739">
    <property type="entry name" value="ADOHCYASE_2"/>
    <property type="match status" value="1"/>
</dbReference>
<evidence type="ECO:0000255" key="1">
    <source>
        <dbReference type="HAMAP-Rule" id="MF_00563"/>
    </source>
</evidence>
<comment type="function">
    <text evidence="1">May play a key role in the regulation of the intracellular concentration of adenosylhomocysteine.</text>
</comment>
<comment type="catalytic activity">
    <reaction evidence="1">
        <text>S-adenosyl-L-homocysteine + H2O = L-homocysteine + adenosine</text>
        <dbReference type="Rhea" id="RHEA:21708"/>
        <dbReference type="ChEBI" id="CHEBI:15377"/>
        <dbReference type="ChEBI" id="CHEBI:16335"/>
        <dbReference type="ChEBI" id="CHEBI:57856"/>
        <dbReference type="ChEBI" id="CHEBI:58199"/>
        <dbReference type="EC" id="3.13.2.1"/>
    </reaction>
</comment>
<comment type="cofactor">
    <cofactor evidence="1">
        <name>NAD(+)</name>
        <dbReference type="ChEBI" id="CHEBI:57540"/>
    </cofactor>
    <text evidence="1">Binds 1 NAD(+) per subunit.</text>
</comment>
<comment type="pathway">
    <text evidence="1">Amino-acid biosynthesis; L-homocysteine biosynthesis; L-homocysteine from S-adenosyl-L-homocysteine: step 1/1.</text>
</comment>
<comment type="subcellular location">
    <subcellularLocation>
        <location evidence="1">Cytoplasm</location>
    </subcellularLocation>
</comment>
<comment type="similarity">
    <text evidence="1">Belongs to the adenosylhomocysteinase family.</text>
</comment>
<organism>
    <name type="scientific">Thermococcus kodakarensis (strain ATCC BAA-918 / JCM 12380 / KOD1)</name>
    <name type="common">Pyrococcus kodakaraensis (strain KOD1)</name>
    <dbReference type="NCBI Taxonomy" id="69014"/>
    <lineage>
        <taxon>Archaea</taxon>
        <taxon>Methanobacteriati</taxon>
        <taxon>Methanobacteriota</taxon>
        <taxon>Thermococci</taxon>
        <taxon>Thermococcales</taxon>
        <taxon>Thermococcaceae</taxon>
        <taxon>Thermococcus</taxon>
    </lineage>
</organism>
<protein>
    <recommendedName>
        <fullName evidence="1">Adenosylhomocysteinase</fullName>
        <ecNumber evidence="1">3.13.2.1</ecNumber>
    </recommendedName>
    <alternativeName>
        <fullName evidence="1">S-adenosyl-L-homocysteine hydrolase</fullName>
        <shortName evidence="1">AdoHcyase</shortName>
    </alternativeName>
</protein>
<reference key="1">
    <citation type="journal article" date="2005" name="Genome Res.">
        <title>Complete genome sequence of the hyperthermophilic archaeon Thermococcus kodakaraensis KOD1 and comparison with Pyrococcus genomes.</title>
        <authorList>
            <person name="Fukui T."/>
            <person name="Atomi H."/>
            <person name="Kanai T."/>
            <person name="Matsumi R."/>
            <person name="Fujiwara S."/>
            <person name="Imanaka T."/>
        </authorList>
    </citation>
    <scope>NUCLEOTIDE SEQUENCE [LARGE SCALE GENOMIC DNA]</scope>
    <source>
        <strain>ATCC BAA-918 / JCM 12380 / KOD1</strain>
    </source>
</reference>
<name>SAHH_THEKO</name>
<proteinExistence type="inferred from homology"/>
<gene>
    <name evidence="1" type="primary">ahcY</name>
    <name type="ordered locus">TK0028</name>
</gene>
<keyword id="KW-0963">Cytoplasm</keyword>
<keyword id="KW-0378">Hydrolase</keyword>
<keyword id="KW-0520">NAD</keyword>
<keyword id="KW-0554">One-carbon metabolism</keyword>
<keyword id="KW-1185">Reference proteome</keyword>
<accession>Q5JED2</accession>
<sequence>MDCTKDYCVKDISLAPSGEKKIDWVSRFMPVLQHIRKDFEERKPFKGVRIAATLHLEMKTAFLLLTLKAAGAEVSAAASNPLSTQDDVVAALAKAGVKVYAIRGEDREQYYEFMHKALDVKPNIIIDDGADMVSTVLKERQELIPEIWGASEETTTGVIRLRAMEKDGVLKFPIIAVNDSYTKYLFDNRYGTGQSTWDGIIRTTNLLVAGKNVVVVGYGWCGRGIAMRARGLGATVIVVEVDPIRALEARMDGFLVMDMMEAAKVGDIFITATGDINCIRKEHFELMKDGAILANAGHFDVEISKPDLEALAVEISEPRPNITEYKMADGRRLYLLAEGRLVNLAAADGHPAEIMDMSFALQAKAAEYIKENRGRLEPKVYVLPREIDEMVARIKLASMGIKIEELTEEQKKYLESWEHGT</sequence>